<dbReference type="EC" id="4.3.2.10" evidence="1"/>
<dbReference type="EMBL" id="CP000058">
    <property type="protein sequence ID" value="AAZ33672.1"/>
    <property type="molecule type" value="Genomic_DNA"/>
</dbReference>
<dbReference type="RefSeq" id="WP_002551458.1">
    <property type="nucleotide sequence ID" value="NC_005773.3"/>
</dbReference>
<dbReference type="SMR" id="Q48C81"/>
<dbReference type="GeneID" id="77280740"/>
<dbReference type="KEGG" id="psp:PSPPH_4922"/>
<dbReference type="eggNOG" id="COG0107">
    <property type="taxonomic scope" value="Bacteria"/>
</dbReference>
<dbReference type="HOGENOM" id="CLU_048577_4_0_6"/>
<dbReference type="UniPathway" id="UPA00031">
    <property type="reaction ID" value="UER00010"/>
</dbReference>
<dbReference type="Proteomes" id="UP000000551">
    <property type="component" value="Chromosome"/>
</dbReference>
<dbReference type="GO" id="GO:0005737">
    <property type="term" value="C:cytoplasm"/>
    <property type="evidence" value="ECO:0007669"/>
    <property type="project" value="UniProtKB-SubCell"/>
</dbReference>
<dbReference type="GO" id="GO:0000107">
    <property type="term" value="F:imidazoleglycerol-phosphate synthase activity"/>
    <property type="evidence" value="ECO:0007669"/>
    <property type="project" value="UniProtKB-UniRule"/>
</dbReference>
<dbReference type="GO" id="GO:0016829">
    <property type="term" value="F:lyase activity"/>
    <property type="evidence" value="ECO:0007669"/>
    <property type="project" value="UniProtKB-KW"/>
</dbReference>
<dbReference type="GO" id="GO:0000105">
    <property type="term" value="P:L-histidine biosynthetic process"/>
    <property type="evidence" value="ECO:0007669"/>
    <property type="project" value="UniProtKB-UniRule"/>
</dbReference>
<dbReference type="CDD" id="cd04731">
    <property type="entry name" value="HisF"/>
    <property type="match status" value="1"/>
</dbReference>
<dbReference type="FunFam" id="3.20.20.70:FF:000006">
    <property type="entry name" value="Imidazole glycerol phosphate synthase subunit HisF"/>
    <property type="match status" value="1"/>
</dbReference>
<dbReference type="Gene3D" id="3.20.20.70">
    <property type="entry name" value="Aldolase class I"/>
    <property type="match status" value="1"/>
</dbReference>
<dbReference type="HAMAP" id="MF_01013">
    <property type="entry name" value="HisF"/>
    <property type="match status" value="1"/>
</dbReference>
<dbReference type="InterPro" id="IPR013785">
    <property type="entry name" value="Aldolase_TIM"/>
</dbReference>
<dbReference type="InterPro" id="IPR006062">
    <property type="entry name" value="His_biosynth"/>
</dbReference>
<dbReference type="InterPro" id="IPR004651">
    <property type="entry name" value="HisF"/>
</dbReference>
<dbReference type="InterPro" id="IPR050064">
    <property type="entry name" value="IGPS_HisA/HisF"/>
</dbReference>
<dbReference type="InterPro" id="IPR011060">
    <property type="entry name" value="RibuloseP-bd_barrel"/>
</dbReference>
<dbReference type="NCBIfam" id="TIGR00735">
    <property type="entry name" value="hisF"/>
    <property type="match status" value="1"/>
</dbReference>
<dbReference type="PANTHER" id="PTHR21235:SF2">
    <property type="entry name" value="IMIDAZOLE GLYCEROL PHOSPHATE SYNTHASE HISHF"/>
    <property type="match status" value="1"/>
</dbReference>
<dbReference type="PANTHER" id="PTHR21235">
    <property type="entry name" value="IMIDAZOLE GLYCEROL PHOSPHATE SYNTHASE SUBUNIT HISF/H IGP SYNTHASE SUBUNIT HISF/H"/>
    <property type="match status" value="1"/>
</dbReference>
<dbReference type="Pfam" id="PF00977">
    <property type="entry name" value="His_biosynth"/>
    <property type="match status" value="1"/>
</dbReference>
<dbReference type="SUPFAM" id="SSF51366">
    <property type="entry name" value="Ribulose-phoshate binding barrel"/>
    <property type="match status" value="1"/>
</dbReference>
<accession>Q48C81</accession>
<name>HIS6_PSE14</name>
<proteinExistence type="inferred from homology"/>
<feature type="chain" id="PRO_0000142210" description="Imidazole glycerol phosphate synthase subunit HisF">
    <location>
        <begin position="1"/>
        <end position="256"/>
    </location>
</feature>
<feature type="active site" evidence="1">
    <location>
        <position position="12"/>
    </location>
</feature>
<feature type="active site" evidence="1">
    <location>
        <position position="131"/>
    </location>
</feature>
<keyword id="KW-0028">Amino-acid biosynthesis</keyword>
<keyword id="KW-0963">Cytoplasm</keyword>
<keyword id="KW-0368">Histidine biosynthesis</keyword>
<keyword id="KW-0456">Lyase</keyword>
<sequence length="256" mass="27102">MALAKRIIPCLDVDNGRVVKGVKFENIRDAGDPVEIARRYDEQGADEITFLDITASVDGRDTTLHTVERMASQVFIPLTVGGGVRTVQDIRNLLNAGADKVSINTAAVFNPEFVGEAAARFGSQCIVVAIDAKKVSGPGETPRWEIFTHGGRKPTGLDAVLWAKKMEDLGAGEILLTSMDQDGMKNGFDLGVTRAISDALGIPVIASGGVGNLEHLAAGVIEGHASAVLAASIFHFGEYTVPEAKAYMASRGIVVR</sequence>
<reference key="1">
    <citation type="journal article" date="2005" name="J. Bacteriol.">
        <title>Whole-genome sequence analysis of Pseudomonas syringae pv. phaseolicola 1448A reveals divergence among pathovars in genes involved in virulence and transposition.</title>
        <authorList>
            <person name="Joardar V."/>
            <person name="Lindeberg M."/>
            <person name="Jackson R.W."/>
            <person name="Selengut J."/>
            <person name="Dodson R."/>
            <person name="Brinkac L.M."/>
            <person name="Daugherty S.C."/>
            <person name="DeBoy R.T."/>
            <person name="Durkin A.S."/>
            <person name="Gwinn Giglio M."/>
            <person name="Madupu R."/>
            <person name="Nelson W.C."/>
            <person name="Rosovitz M.J."/>
            <person name="Sullivan S.A."/>
            <person name="Crabtree J."/>
            <person name="Creasy T."/>
            <person name="Davidsen T.M."/>
            <person name="Haft D.H."/>
            <person name="Zafar N."/>
            <person name="Zhou L."/>
            <person name="Halpin R."/>
            <person name="Holley T."/>
            <person name="Khouri H.M."/>
            <person name="Feldblyum T.V."/>
            <person name="White O."/>
            <person name="Fraser C.M."/>
            <person name="Chatterjee A.K."/>
            <person name="Cartinhour S."/>
            <person name="Schneider D."/>
            <person name="Mansfield J.W."/>
            <person name="Collmer A."/>
            <person name="Buell R."/>
        </authorList>
    </citation>
    <scope>NUCLEOTIDE SEQUENCE [LARGE SCALE GENOMIC DNA]</scope>
    <source>
        <strain>1448A / Race 6</strain>
    </source>
</reference>
<comment type="function">
    <text evidence="1">IGPS catalyzes the conversion of PRFAR and glutamine to IGP, AICAR and glutamate. The HisF subunit catalyzes the cyclization activity that produces IGP and AICAR from PRFAR using the ammonia provided by the HisH subunit.</text>
</comment>
<comment type="catalytic activity">
    <reaction evidence="1">
        <text>5-[(5-phospho-1-deoxy-D-ribulos-1-ylimino)methylamino]-1-(5-phospho-beta-D-ribosyl)imidazole-4-carboxamide + L-glutamine = D-erythro-1-(imidazol-4-yl)glycerol 3-phosphate + 5-amino-1-(5-phospho-beta-D-ribosyl)imidazole-4-carboxamide + L-glutamate + H(+)</text>
        <dbReference type="Rhea" id="RHEA:24793"/>
        <dbReference type="ChEBI" id="CHEBI:15378"/>
        <dbReference type="ChEBI" id="CHEBI:29985"/>
        <dbReference type="ChEBI" id="CHEBI:58278"/>
        <dbReference type="ChEBI" id="CHEBI:58359"/>
        <dbReference type="ChEBI" id="CHEBI:58475"/>
        <dbReference type="ChEBI" id="CHEBI:58525"/>
        <dbReference type="EC" id="4.3.2.10"/>
    </reaction>
</comment>
<comment type="pathway">
    <text evidence="1">Amino-acid biosynthesis; L-histidine biosynthesis; L-histidine from 5-phospho-alpha-D-ribose 1-diphosphate: step 5/9.</text>
</comment>
<comment type="subunit">
    <text evidence="1">Heterodimer of HisH and HisF.</text>
</comment>
<comment type="subcellular location">
    <subcellularLocation>
        <location evidence="1">Cytoplasm</location>
    </subcellularLocation>
</comment>
<comment type="similarity">
    <text evidence="1">Belongs to the HisA/HisF family.</text>
</comment>
<organism>
    <name type="scientific">Pseudomonas savastanoi pv. phaseolicola (strain 1448A / Race 6)</name>
    <name type="common">Pseudomonas syringae pv. phaseolicola (strain 1448A / Race 6)</name>
    <dbReference type="NCBI Taxonomy" id="264730"/>
    <lineage>
        <taxon>Bacteria</taxon>
        <taxon>Pseudomonadati</taxon>
        <taxon>Pseudomonadota</taxon>
        <taxon>Gammaproteobacteria</taxon>
        <taxon>Pseudomonadales</taxon>
        <taxon>Pseudomonadaceae</taxon>
        <taxon>Pseudomonas</taxon>
    </lineage>
</organism>
<evidence type="ECO:0000255" key="1">
    <source>
        <dbReference type="HAMAP-Rule" id="MF_01013"/>
    </source>
</evidence>
<gene>
    <name evidence="1" type="primary">hisF</name>
    <name type="ordered locus">PSPPH_4922</name>
</gene>
<protein>
    <recommendedName>
        <fullName evidence="1">Imidazole glycerol phosphate synthase subunit HisF</fullName>
        <ecNumber evidence="1">4.3.2.10</ecNumber>
    </recommendedName>
    <alternativeName>
        <fullName evidence="1">IGP synthase cyclase subunit</fullName>
    </alternativeName>
    <alternativeName>
        <fullName evidence="1">IGP synthase subunit HisF</fullName>
    </alternativeName>
    <alternativeName>
        <fullName evidence="1">ImGP synthase subunit HisF</fullName>
        <shortName evidence="1">IGPS subunit HisF</shortName>
    </alternativeName>
</protein>